<name>CLPX_RHOPB</name>
<comment type="function">
    <text evidence="1">ATP-dependent specificity component of the Clp protease. It directs the protease to specific substrates. Can perform chaperone functions in the absence of ClpP.</text>
</comment>
<comment type="subunit">
    <text evidence="1">Component of the ClpX-ClpP complex. Forms a hexameric ring that, in the presence of ATP, binds to fourteen ClpP subunits assembled into a disk-like structure with a central cavity, resembling the structure of eukaryotic proteasomes.</text>
</comment>
<comment type="similarity">
    <text evidence="1">Belongs to the ClpX chaperone family.</text>
</comment>
<sequence>MSKVGTSDSKNTLYCSFCGKSQHEVRKLIAGPTVFICDECVELCMDIIREENKSSLVKSRDGIPTPKEICKVLDDYVIGQSHAKKVLSVAVHNHYKRLNHQTKHNDVELAKSNILLIGPTGSGKTLLAQTLARILDVPFTMADATTLTEAGYVGEDVENIILKLLQSADYNVERAQRGIVYIDEIDKISRKSDNPSITRDVSGEGVQQALLKIMEGTVASVPPQGGRKHPQQEFLQVDTTNILFICGGAFSGLEKIISARGRSTSIGFAAQVLAPEDRRTGEIFRHVEPEDLLKYGLIPEFVGRLPVVATLEDLDEASLKKILTDPKNALVKQYQRLFEMENIELTFADEALGAVARKAIERKTGARGLRSILESILLETMFDLPGLEGVEEVVISREVVEGTARPLYIYADRSDRTAESSASA</sequence>
<proteinExistence type="inferred from homology"/>
<evidence type="ECO:0000255" key="1">
    <source>
        <dbReference type="HAMAP-Rule" id="MF_00175"/>
    </source>
</evidence>
<evidence type="ECO:0000255" key="2">
    <source>
        <dbReference type="PROSITE-ProRule" id="PRU01250"/>
    </source>
</evidence>
<organism>
    <name type="scientific">Rhodopseudomonas palustris (strain BisB18)</name>
    <dbReference type="NCBI Taxonomy" id="316056"/>
    <lineage>
        <taxon>Bacteria</taxon>
        <taxon>Pseudomonadati</taxon>
        <taxon>Pseudomonadota</taxon>
        <taxon>Alphaproteobacteria</taxon>
        <taxon>Hyphomicrobiales</taxon>
        <taxon>Nitrobacteraceae</taxon>
        <taxon>Rhodopseudomonas</taxon>
    </lineage>
</organism>
<feature type="chain" id="PRO_1000024635" description="ATP-dependent Clp protease ATP-binding subunit ClpX">
    <location>
        <begin position="1"/>
        <end position="424"/>
    </location>
</feature>
<feature type="domain" description="ClpX-type ZB" evidence="2">
    <location>
        <begin position="3"/>
        <end position="56"/>
    </location>
</feature>
<feature type="binding site" evidence="2">
    <location>
        <position position="15"/>
    </location>
    <ligand>
        <name>Zn(2+)</name>
        <dbReference type="ChEBI" id="CHEBI:29105"/>
    </ligand>
</feature>
<feature type="binding site" evidence="2">
    <location>
        <position position="18"/>
    </location>
    <ligand>
        <name>Zn(2+)</name>
        <dbReference type="ChEBI" id="CHEBI:29105"/>
    </ligand>
</feature>
<feature type="binding site" evidence="2">
    <location>
        <position position="37"/>
    </location>
    <ligand>
        <name>Zn(2+)</name>
        <dbReference type="ChEBI" id="CHEBI:29105"/>
    </ligand>
</feature>
<feature type="binding site" evidence="2">
    <location>
        <position position="40"/>
    </location>
    <ligand>
        <name>Zn(2+)</name>
        <dbReference type="ChEBI" id="CHEBI:29105"/>
    </ligand>
</feature>
<feature type="binding site" evidence="1">
    <location>
        <begin position="119"/>
        <end position="126"/>
    </location>
    <ligand>
        <name>ATP</name>
        <dbReference type="ChEBI" id="CHEBI:30616"/>
    </ligand>
</feature>
<gene>
    <name evidence="1" type="primary">clpX</name>
    <name type="ordered locus">RPC_2393</name>
</gene>
<protein>
    <recommendedName>
        <fullName evidence="1">ATP-dependent Clp protease ATP-binding subunit ClpX</fullName>
    </recommendedName>
</protein>
<dbReference type="EMBL" id="CP000301">
    <property type="protein sequence ID" value="ABD87945.1"/>
    <property type="molecule type" value="Genomic_DNA"/>
</dbReference>
<dbReference type="SMR" id="Q215J1"/>
<dbReference type="STRING" id="316056.RPC_2393"/>
<dbReference type="KEGG" id="rpc:RPC_2393"/>
<dbReference type="eggNOG" id="COG1219">
    <property type="taxonomic scope" value="Bacteria"/>
</dbReference>
<dbReference type="HOGENOM" id="CLU_014218_8_2_5"/>
<dbReference type="OrthoDB" id="9804062at2"/>
<dbReference type="GO" id="GO:0009376">
    <property type="term" value="C:HslUV protease complex"/>
    <property type="evidence" value="ECO:0007669"/>
    <property type="project" value="TreeGrafter"/>
</dbReference>
<dbReference type="GO" id="GO:0005524">
    <property type="term" value="F:ATP binding"/>
    <property type="evidence" value="ECO:0007669"/>
    <property type="project" value="UniProtKB-UniRule"/>
</dbReference>
<dbReference type="GO" id="GO:0016887">
    <property type="term" value="F:ATP hydrolysis activity"/>
    <property type="evidence" value="ECO:0007669"/>
    <property type="project" value="InterPro"/>
</dbReference>
<dbReference type="GO" id="GO:0140662">
    <property type="term" value="F:ATP-dependent protein folding chaperone"/>
    <property type="evidence" value="ECO:0007669"/>
    <property type="project" value="InterPro"/>
</dbReference>
<dbReference type="GO" id="GO:0046983">
    <property type="term" value="F:protein dimerization activity"/>
    <property type="evidence" value="ECO:0007669"/>
    <property type="project" value="InterPro"/>
</dbReference>
<dbReference type="GO" id="GO:0051082">
    <property type="term" value="F:unfolded protein binding"/>
    <property type="evidence" value="ECO:0007669"/>
    <property type="project" value="UniProtKB-UniRule"/>
</dbReference>
<dbReference type="GO" id="GO:0008270">
    <property type="term" value="F:zinc ion binding"/>
    <property type="evidence" value="ECO:0007669"/>
    <property type="project" value="InterPro"/>
</dbReference>
<dbReference type="GO" id="GO:0051301">
    <property type="term" value="P:cell division"/>
    <property type="evidence" value="ECO:0007669"/>
    <property type="project" value="TreeGrafter"/>
</dbReference>
<dbReference type="GO" id="GO:0051603">
    <property type="term" value="P:proteolysis involved in protein catabolic process"/>
    <property type="evidence" value="ECO:0007669"/>
    <property type="project" value="TreeGrafter"/>
</dbReference>
<dbReference type="CDD" id="cd19497">
    <property type="entry name" value="RecA-like_ClpX"/>
    <property type="match status" value="1"/>
</dbReference>
<dbReference type="FunFam" id="1.10.8.60:FF:000002">
    <property type="entry name" value="ATP-dependent Clp protease ATP-binding subunit ClpX"/>
    <property type="match status" value="1"/>
</dbReference>
<dbReference type="FunFam" id="3.40.50.300:FF:000005">
    <property type="entry name" value="ATP-dependent Clp protease ATP-binding subunit ClpX"/>
    <property type="match status" value="1"/>
</dbReference>
<dbReference type="Gene3D" id="1.10.8.60">
    <property type="match status" value="1"/>
</dbReference>
<dbReference type="Gene3D" id="6.20.220.10">
    <property type="entry name" value="ClpX chaperone, C4-type zinc finger domain"/>
    <property type="match status" value="1"/>
</dbReference>
<dbReference type="Gene3D" id="3.40.50.300">
    <property type="entry name" value="P-loop containing nucleotide triphosphate hydrolases"/>
    <property type="match status" value="1"/>
</dbReference>
<dbReference type="HAMAP" id="MF_00175">
    <property type="entry name" value="ClpX"/>
    <property type="match status" value="1"/>
</dbReference>
<dbReference type="InterPro" id="IPR003593">
    <property type="entry name" value="AAA+_ATPase"/>
</dbReference>
<dbReference type="InterPro" id="IPR050052">
    <property type="entry name" value="ATP-dep_Clp_protease_ClpX"/>
</dbReference>
<dbReference type="InterPro" id="IPR003959">
    <property type="entry name" value="ATPase_AAA_core"/>
</dbReference>
<dbReference type="InterPro" id="IPR019489">
    <property type="entry name" value="Clp_ATPase_C"/>
</dbReference>
<dbReference type="InterPro" id="IPR004487">
    <property type="entry name" value="Clp_protease_ATP-bd_su_ClpX"/>
</dbReference>
<dbReference type="InterPro" id="IPR046425">
    <property type="entry name" value="ClpX_bact"/>
</dbReference>
<dbReference type="InterPro" id="IPR027417">
    <property type="entry name" value="P-loop_NTPase"/>
</dbReference>
<dbReference type="InterPro" id="IPR010603">
    <property type="entry name" value="Znf_CppX_C4"/>
</dbReference>
<dbReference type="InterPro" id="IPR038366">
    <property type="entry name" value="Znf_CppX_C4_sf"/>
</dbReference>
<dbReference type="NCBIfam" id="TIGR00382">
    <property type="entry name" value="clpX"/>
    <property type="match status" value="1"/>
</dbReference>
<dbReference type="NCBIfam" id="NF003745">
    <property type="entry name" value="PRK05342.1"/>
    <property type="match status" value="1"/>
</dbReference>
<dbReference type="PANTHER" id="PTHR48102:SF7">
    <property type="entry name" value="ATP-DEPENDENT CLP PROTEASE ATP-BINDING SUBUNIT CLPX-LIKE, MITOCHONDRIAL"/>
    <property type="match status" value="1"/>
</dbReference>
<dbReference type="PANTHER" id="PTHR48102">
    <property type="entry name" value="ATP-DEPENDENT CLP PROTEASE ATP-BINDING SUBUNIT CLPX-LIKE, MITOCHONDRIAL-RELATED"/>
    <property type="match status" value="1"/>
</dbReference>
<dbReference type="Pfam" id="PF07724">
    <property type="entry name" value="AAA_2"/>
    <property type="match status" value="1"/>
</dbReference>
<dbReference type="Pfam" id="PF10431">
    <property type="entry name" value="ClpB_D2-small"/>
    <property type="match status" value="1"/>
</dbReference>
<dbReference type="Pfam" id="PF06689">
    <property type="entry name" value="zf-C4_ClpX"/>
    <property type="match status" value="1"/>
</dbReference>
<dbReference type="SMART" id="SM00382">
    <property type="entry name" value="AAA"/>
    <property type="match status" value="1"/>
</dbReference>
<dbReference type="SMART" id="SM01086">
    <property type="entry name" value="ClpB_D2-small"/>
    <property type="match status" value="1"/>
</dbReference>
<dbReference type="SMART" id="SM00994">
    <property type="entry name" value="zf-C4_ClpX"/>
    <property type="match status" value="1"/>
</dbReference>
<dbReference type="SUPFAM" id="SSF57716">
    <property type="entry name" value="Glucocorticoid receptor-like (DNA-binding domain)"/>
    <property type="match status" value="1"/>
</dbReference>
<dbReference type="SUPFAM" id="SSF52540">
    <property type="entry name" value="P-loop containing nucleoside triphosphate hydrolases"/>
    <property type="match status" value="1"/>
</dbReference>
<dbReference type="PROSITE" id="PS51902">
    <property type="entry name" value="CLPX_ZB"/>
    <property type="match status" value="1"/>
</dbReference>
<keyword id="KW-0067">ATP-binding</keyword>
<keyword id="KW-0143">Chaperone</keyword>
<keyword id="KW-0479">Metal-binding</keyword>
<keyword id="KW-0547">Nucleotide-binding</keyword>
<keyword id="KW-0862">Zinc</keyword>
<reference key="1">
    <citation type="submission" date="2006-03" db="EMBL/GenBank/DDBJ databases">
        <title>Complete sequence of Rhodopseudomonas palustris BisB18.</title>
        <authorList>
            <consortium name="US DOE Joint Genome Institute"/>
            <person name="Copeland A."/>
            <person name="Lucas S."/>
            <person name="Lapidus A."/>
            <person name="Barry K."/>
            <person name="Detter J.C."/>
            <person name="Glavina del Rio T."/>
            <person name="Hammon N."/>
            <person name="Israni S."/>
            <person name="Dalin E."/>
            <person name="Tice H."/>
            <person name="Pitluck S."/>
            <person name="Chain P."/>
            <person name="Malfatti S."/>
            <person name="Shin M."/>
            <person name="Vergez L."/>
            <person name="Schmutz J."/>
            <person name="Larimer F."/>
            <person name="Land M."/>
            <person name="Hauser L."/>
            <person name="Pelletier D.A."/>
            <person name="Kyrpides N."/>
            <person name="Anderson I."/>
            <person name="Oda Y."/>
            <person name="Harwood C.S."/>
            <person name="Richardson P."/>
        </authorList>
    </citation>
    <scope>NUCLEOTIDE SEQUENCE [LARGE SCALE GENOMIC DNA]</scope>
    <source>
        <strain>BisB18</strain>
    </source>
</reference>
<accession>Q215J1</accession>